<comment type="similarity">
    <text evidence="1">Belongs to the ZPR1 family.</text>
</comment>
<organism>
    <name type="scientific">Methanocaldococcus jannaschii (strain ATCC 43067 / DSM 2661 / JAL-1 / JCM 10045 / NBRC 100440)</name>
    <name type="common">Methanococcus jannaschii</name>
    <dbReference type="NCBI Taxonomy" id="243232"/>
    <lineage>
        <taxon>Archaea</taxon>
        <taxon>Methanobacteriati</taxon>
        <taxon>Methanobacteriota</taxon>
        <taxon>Methanomada group</taxon>
        <taxon>Methanococci</taxon>
        <taxon>Methanococcales</taxon>
        <taxon>Methanocaldococcaceae</taxon>
        <taxon>Methanocaldococcus</taxon>
    </lineage>
</organism>
<accession>Q57950</accession>
<proteinExistence type="inferred from homology"/>
<keyword id="KW-0479">Metal-binding</keyword>
<keyword id="KW-1185">Reference proteome</keyword>
<keyword id="KW-0862">Zinc</keyword>
<keyword id="KW-0863">Zinc-finger</keyword>
<gene>
    <name type="ordered locus">MJ0530</name>
</gene>
<evidence type="ECO:0000305" key="1"/>
<sequence length="198" mass="22591">MENVQRLDCPVCGGKGTFVITSHQIDIPYFGPVLETTMICEKCNFRRSDVFPLEVREPKKYILKIESERDLNKRVVRSSSAYIQIPELGVEIKPGPLAEGFVSNVEGVLNRVDNILQTLIRWAETEEQKKKAEELRERIKKLKEGKEEATLILIDPLGHSAIIGEGVEEEILSEEEVEKLKEGIVIMDLDKDKEKEKE</sequence>
<dbReference type="EMBL" id="L77117">
    <property type="protein sequence ID" value="AAB98521.1"/>
    <property type="molecule type" value="Genomic_DNA"/>
</dbReference>
<dbReference type="PIR" id="B64366">
    <property type="entry name" value="B64366"/>
</dbReference>
<dbReference type="RefSeq" id="WP_010870034.1">
    <property type="nucleotide sequence ID" value="NC_000909.1"/>
</dbReference>
<dbReference type="SMR" id="Q57950"/>
<dbReference type="STRING" id="243232.MJ_0530"/>
<dbReference type="PaxDb" id="243232-MJ_0530"/>
<dbReference type="EnsemblBacteria" id="AAB98521">
    <property type="protein sequence ID" value="AAB98521"/>
    <property type="gene ID" value="MJ_0530"/>
</dbReference>
<dbReference type="GeneID" id="1451395"/>
<dbReference type="KEGG" id="mja:MJ_0530"/>
<dbReference type="eggNOG" id="arCOG04265">
    <property type="taxonomic scope" value="Archaea"/>
</dbReference>
<dbReference type="HOGENOM" id="CLU_107446_0_0_2"/>
<dbReference type="InParanoid" id="Q57950"/>
<dbReference type="OrthoDB" id="14924at2157"/>
<dbReference type="PhylomeDB" id="Q57950"/>
<dbReference type="Proteomes" id="UP000000805">
    <property type="component" value="Chromosome"/>
</dbReference>
<dbReference type="GO" id="GO:0008270">
    <property type="term" value="F:zinc ion binding"/>
    <property type="evidence" value="ECO:0007669"/>
    <property type="project" value="UniProtKB-KW"/>
</dbReference>
<dbReference type="FunFam" id="2.20.25.420:FF:000006">
    <property type="entry name" value="Zn finger containing protein"/>
    <property type="match status" value="1"/>
</dbReference>
<dbReference type="FunFam" id="2.60.120.1040:FF:000008">
    <property type="entry name" value="Zn finger containing protein"/>
    <property type="match status" value="1"/>
</dbReference>
<dbReference type="Gene3D" id="2.60.120.1040">
    <property type="entry name" value="ZPR1, A/B domain"/>
    <property type="match status" value="1"/>
</dbReference>
<dbReference type="Gene3D" id="2.20.25.420">
    <property type="entry name" value="ZPR1, zinc finger domain"/>
    <property type="match status" value="1"/>
</dbReference>
<dbReference type="InterPro" id="IPR004457">
    <property type="entry name" value="Znf_ZPR1"/>
</dbReference>
<dbReference type="InterPro" id="IPR040141">
    <property type="entry name" value="ZPR1"/>
</dbReference>
<dbReference type="InterPro" id="IPR004470">
    <property type="entry name" value="ZPR1-like_arc"/>
</dbReference>
<dbReference type="InterPro" id="IPR042451">
    <property type="entry name" value="ZPR1_A/B_dom"/>
</dbReference>
<dbReference type="InterPro" id="IPR056180">
    <property type="entry name" value="ZPR1_jr_dom"/>
</dbReference>
<dbReference type="InterPro" id="IPR042452">
    <property type="entry name" value="ZPR1_Znf1/2"/>
</dbReference>
<dbReference type="NCBIfam" id="TIGR00340">
    <property type="entry name" value="zpr1_rel"/>
    <property type="match status" value="1"/>
</dbReference>
<dbReference type="NCBIfam" id="TIGR00310">
    <property type="entry name" value="ZPR1_znf"/>
    <property type="match status" value="1"/>
</dbReference>
<dbReference type="PANTHER" id="PTHR10876">
    <property type="entry name" value="ZINC FINGER PROTEIN ZPR1"/>
    <property type="match status" value="1"/>
</dbReference>
<dbReference type="PANTHER" id="PTHR10876:SF0">
    <property type="entry name" value="ZINC FINGER PROTEIN ZPR1"/>
    <property type="match status" value="1"/>
</dbReference>
<dbReference type="Pfam" id="PF22794">
    <property type="entry name" value="jr-ZPR1"/>
    <property type="match status" value="1"/>
</dbReference>
<dbReference type="Pfam" id="PF03367">
    <property type="entry name" value="Zn_ribbon_ZPR1"/>
    <property type="match status" value="1"/>
</dbReference>
<dbReference type="SMART" id="SM00709">
    <property type="entry name" value="Zpr1"/>
    <property type="match status" value="1"/>
</dbReference>
<reference key="1">
    <citation type="journal article" date="1996" name="Science">
        <title>Complete genome sequence of the methanogenic archaeon, Methanococcus jannaschii.</title>
        <authorList>
            <person name="Bult C.J."/>
            <person name="White O."/>
            <person name="Olsen G.J."/>
            <person name="Zhou L."/>
            <person name="Fleischmann R.D."/>
            <person name="Sutton G.G."/>
            <person name="Blake J.A."/>
            <person name="FitzGerald L.M."/>
            <person name="Clayton R.A."/>
            <person name="Gocayne J.D."/>
            <person name="Kerlavage A.R."/>
            <person name="Dougherty B.A."/>
            <person name="Tomb J.-F."/>
            <person name="Adams M.D."/>
            <person name="Reich C.I."/>
            <person name="Overbeek R."/>
            <person name="Kirkness E.F."/>
            <person name="Weinstock K.G."/>
            <person name="Merrick J.M."/>
            <person name="Glodek A."/>
            <person name="Scott J.L."/>
            <person name="Geoghagen N.S.M."/>
            <person name="Weidman J.F."/>
            <person name="Fuhrmann J.L."/>
            <person name="Nguyen D."/>
            <person name="Utterback T.R."/>
            <person name="Kelley J.M."/>
            <person name="Peterson J.D."/>
            <person name="Sadow P.W."/>
            <person name="Hanna M.C."/>
            <person name="Cotton M.D."/>
            <person name="Roberts K.M."/>
            <person name="Hurst M.A."/>
            <person name="Kaine B.P."/>
            <person name="Borodovsky M."/>
            <person name="Klenk H.-P."/>
            <person name="Fraser C.M."/>
            <person name="Smith H.O."/>
            <person name="Woese C.R."/>
            <person name="Venter J.C."/>
        </authorList>
    </citation>
    <scope>NUCLEOTIDE SEQUENCE [LARGE SCALE GENOMIC DNA]</scope>
    <source>
        <strain>ATCC 43067 / DSM 2661 / JAL-1 / JCM 10045 / NBRC 100440</strain>
    </source>
</reference>
<feature type="chain" id="PRO_0000119041" description="Uncharacterized ZPR1-like protein MJ0530">
    <location>
        <begin position="1"/>
        <end position="198"/>
    </location>
</feature>
<feature type="zinc finger region" description="C4-type">
    <location>
        <begin position="9"/>
        <end position="43"/>
    </location>
</feature>
<protein>
    <recommendedName>
        <fullName>Uncharacterized ZPR1-like protein MJ0530</fullName>
    </recommendedName>
</protein>
<name>Y530_METJA</name>